<organism>
    <name type="scientific">Mus musculus</name>
    <name type="common">Mouse</name>
    <dbReference type="NCBI Taxonomy" id="10090"/>
    <lineage>
        <taxon>Eukaryota</taxon>
        <taxon>Metazoa</taxon>
        <taxon>Chordata</taxon>
        <taxon>Craniata</taxon>
        <taxon>Vertebrata</taxon>
        <taxon>Euteleostomi</taxon>
        <taxon>Mammalia</taxon>
        <taxon>Eutheria</taxon>
        <taxon>Euarchontoglires</taxon>
        <taxon>Glires</taxon>
        <taxon>Rodentia</taxon>
        <taxon>Myomorpha</taxon>
        <taxon>Muroidea</taxon>
        <taxon>Muridae</taxon>
        <taxon>Murinae</taxon>
        <taxon>Mus</taxon>
        <taxon>Mus</taxon>
    </lineage>
</organism>
<keyword id="KW-0165">Cleavage on pair of basic residues</keyword>
<keyword id="KW-0527">Neuropeptide</keyword>
<keyword id="KW-1185">Reference proteome</keyword>
<keyword id="KW-0964">Secreted</keyword>
<keyword id="KW-0732">Signal</keyword>
<feature type="signal peptide" evidence="1">
    <location>
        <begin position="1"/>
        <end position="23"/>
    </location>
</feature>
<feature type="propeptide" id="PRO_0000042941">
    <location>
        <begin position="24"/>
        <end position="69"/>
    </location>
</feature>
<feature type="peptide" id="PRO_0000042942" description="Neuropeptide S">
    <location>
        <begin position="70"/>
        <end position="89"/>
    </location>
</feature>
<name>NPS_MOUSE</name>
<proteinExistence type="inferred from homology"/>
<comment type="function">
    <text evidence="2">May play an important anorexigenic role. Modulates arousal and anxiety as well as increases locomotor activity. Binds to its receptor NPSR1 with nanomolar affinity to increase intracellular calcium concentrations.</text>
</comment>
<comment type="subcellular location">
    <subcellularLocation>
        <location>Secreted</location>
    </subcellularLocation>
</comment>
<reference key="1">
    <citation type="patent" date="2002-04-18" number="WO0231145">
        <title>Novel G protein-coupled receptor protein and its DNA.</title>
        <authorList>
            <person name="Sato S."/>
            <person name="Shintani Y."/>
            <person name="Miyajima N."/>
            <person name="Yoshimura K."/>
        </authorList>
    </citation>
    <scope>NUCLEOTIDE SEQUENCE [MRNA]</scope>
</reference>
<reference key="2">
    <citation type="journal article" date="2005" name="FEBS J.">
        <title>Neuropeptide S as a novel arousal promoting peptide transmitter.</title>
        <authorList>
            <person name="Reinscheid R.K."/>
            <person name="Xu Y.L."/>
        </authorList>
    </citation>
    <scope>FUNCTION</scope>
</reference>
<accession>P0C0P8</accession>
<sequence>MIGSLKLSFVLALSLSVMHVLWCYPVLSSKVPGKPDYFLILLSSCPARLEGSDRLAFLKPILEKTSMKRSFRNGVGSGAKKTSFRRAKQ</sequence>
<protein>
    <recommendedName>
        <fullName>Neuropeptide S</fullName>
    </recommendedName>
</protein>
<gene>
    <name type="primary">Nps</name>
</gene>
<evidence type="ECO:0000255" key="1"/>
<evidence type="ECO:0000269" key="2">
    <source>
    </source>
</evidence>
<dbReference type="EMBL" id="BD168690">
    <property type="status" value="NOT_ANNOTATED_CDS"/>
    <property type="molecule type" value="Unassigned_DNA"/>
</dbReference>
<dbReference type="CCDS" id="CCDS52420.1"/>
<dbReference type="RefSeq" id="NP_001157083.1">
    <property type="nucleotide sequence ID" value="NM_001163611.1"/>
</dbReference>
<dbReference type="FunCoup" id="P0C0P8">
    <property type="interactions" value="387"/>
</dbReference>
<dbReference type="STRING" id="10090.ENSMUSP00000095597"/>
<dbReference type="PaxDb" id="10090-ENSMUSP00000095597"/>
<dbReference type="Antibodypedia" id="57702">
    <property type="antibodies" value="128 antibodies from 18 providers"/>
</dbReference>
<dbReference type="Ensembl" id="ENSMUST00000097983.5">
    <property type="protein sequence ID" value="ENSMUSP00000095597.4"/>
    <property type="gene ID" value="ENSMUSG00000073804.6"/>
</dbReference>
<dbReference type="GeneID" id="100043254"/>
<dbReference type="KEGG" id="mmu:100043254"/>
<dbReference type="UCSC" id="uc012fvj.1">
    <property type="organism name" value="mouse"/>
</dbReference>
<dbReference type="AGR" id="MGI:3642232"/>
<dbReference type="CTD" id="594857"/>
<dbReference type="MGI" id="MGI:3642232">
    <property type="gene designation" value="Nps"/>
</dbReference>
<dbReference type="VEuPathDB" id="HostDB:ENSMUSG00000073804"/>
<dbReference type="eggNOG" id="ENOG502SSTA">
    <property type="taxonomic scope" value="Eukaryota"/>
</dbReference>
<dbReference type="GeneTree" id="ENSGT00400000024769"/>
<dbReference type="HOGENOM" id="CLU_2432613_0_0_1"/>
<dbReference type="InParanoid" id="P0C0P8"/>
<dbReference type="OMA" id="MFVCSGY"/>
<dbReference type="OrthoDB" id="9877592at2759"/>
<dbReference type="PhylomeDB" id="P0C0P8"/>
<dbReference type="Reactome" id="R-MMU-375276">
    <property type="pathway name" value="Peptide ligand-binding receptors"/>
</dbReference>
<dbReference type="Reactome" id="R-MMU-416476">
    <property type="pathway name" value="G alpha (q) signalling events"/>
</dbReference>
<dbReference type="Reactome" id="R-MMU-418555">
    <property type="pathway name" value="G alpha (s) signalling events"/>
</dbReference>
<dbReference type="BioGRID-ORCS" id="100043254">
    <property type="hits" value="3 hits in 76 CRISPR screens"/>
</dbReference>
<dbReference type="PRO" id="PR:P0C0P8"/>
<dbReference type="Proteomes" id="UP000000589">
    <property type="component" value="Chromosome 7"/>
</dbReference>
<dbReference type="RNAct" id="P0C0P8">
    <property type="molecule type" value="protein"/>
</dbReference>
<dbReference type="Bgee" id="ENSMUSG00000073804">
    <property type="expression patterns" value="Expressed in epiblast cell in embryo and 8 other cell types or tissues"/>
</dbReference>
<dbReference type="ExpressionAtlas" id="P0C0P8">
    <property type="expression patterns" value="baseline and differential"/>
</dbReference>
<dbReference type="GO" id="GO:0005576">
    <property type="term" value="C:extracellular region"/>
    <property type="evidence" value="ECO:0007669"/>
    <property type="project" value="UniProtKB-SubCell"/>
</dbReference>
<dbReference type="GO" id="GO:0045202">
    <property type="term" value="C:synapse"/>
    <property type="evidence" value="ECO:0007669"/>
    <property type="project" value="GOC"/>
</dbReference>
<dbReference type="GO" id="GO:0007218">
    <property type="term" value="P:neuropeptide signaling pathway"/>
    <property type="evidence" value="ECO:0007669"/>
    <property type="project" value="UniProtKB-KW"/>
</dbReference>
<dbReference type="GO" id="GO:0045760">
    <property type="term" value="P:positive regulation of action potential"/>
    <property type="evidence" value="ECO:0000314"/>
    <property type="project" value="MGI"/>
</dbReference>
<dbReference type="GO" id="GO:0010841">
    <property type="term" value="P:positive regulation of circadian sleep/wake cycle, wakefulness"/>
    <property type="evidence" value="ECO:0007669"/>
    <property type="project" value="Ensembl"/>
</dbReference>
<dbReference type="GO" id="GO:0032230">
    <property type="term" value="P:positive regulation of synaptic transmission, GABAergic"/>
    <property type="evidence" value="ECO:0000314"/>
    <property type="project" value="MGI"/>
</dbReference>
<dbReference type="GO" id="GO:0051968">
    <property type="term" value="P:positive regulation of synaptic transmission, glutamatergic"/>
    <property type="evidence" value="ECO:0000314"/>
    <property type="project" value="MGI"/>
</dbReference>
<dbReference type="GO" id="GO:0035249">
    <property type="term" value="P:synaptic transmission, glutamatergic"/>
    <property type="evidence" value="ECO:0000314"/>
    <property type="project" value="MGI"/>
</dbReference>
<dbReference type="GO" id="GO:0008542">
    <property type="term" value="P:visual learning"/>
    <property type="evidence" value="ECO:0000314"/>
    <property type="project" value="MGI"/>
</dbReference>
<dbReference type="InterPro" id="IPR028138">
    <property type="entry name" value="Neuropeptide_S"/>
</dbReference>
<dbReference type="PANTHER" id="PTHR36679">
    <property type="entry name" value="NEUROPEPTIDE S"/>
    <property type="match status" value="1"/>
</dbReference>
<dbReference type="PANTHER" id="PTHR36679:SF1">
    <property type="entry name" value="NEUROPEPTIDE S"/>
    <property type="match status" value="1"/>
</dbReference>
<dbReference type="Pfam" id="PF14993">
    <property type="entry name" value="Neuropeptide_S"/>
    <property type="match status" value="1"/>
</dbReference>